<comment type="function">
    <text evidence="1">General (non sugar-specific) component of the phosphoenolpyruvate-dependent sugar phosphotransferase system (sugar PTS). This major carbohydrate active-transport system catalyzes the phosphorylation of incoming sugar substrates concomitantly with their translocation across the cell membrane. The phosphoryl group from phosphoenolpyruvate (PEP) is transferred to the phosphoryl carrier protein HPr by enzyme I. Phospho-HPr then transfers it to the PTS EIIA domain.</text>
</comment>
<comment type="function">
    <text evidence="1">P-Ser-HPr interacts with the catabolite control protein A (CcpA), forming a complex that binds to DNA at the catabolite response elements cre, operator sites preceding a large number of catabolite-regulated genes. Thus, P-Ser-HPr is a corepressor in carbon catabolite repression (CCR), a mechanism that allows bacteria to coordinate and optimize the utilization of available carbon sources. P-Ser-HPr also plays a role in inducer exclusion, in which it probably interacts with several non-PTS permeases and inhibits their transport activity (By similarity).</text>
</comment>
<comment type="activity regulation">
    <text evidence="1">Phosphorylation on Ser-46 inhibits the phosphoryl transfer from enzyme I to HPr.</text>
</comment>
<comment type="subcellular location">
    <subcellularLocation>
        <location evidence="1">Cytoplasm</location>
    </subcellularLocation>
</comment>
<sequence length="88" mass="9496">MEQNSYVIIDETGIHARPATMLVQTASKFDSDIQLEYNGKKVNLKSIMGVMSLGVGKDAEITIYADGSDESDAIQAISDVLSKEGLTK</sequence>
<name>PTHP_STAAR</name>
<protein>
    <recommendedName>
        <fullName>Phosphocarrier protein HPr</fullName>
    </recommendedName>
    <alternativeName>
        <fullName>Histidine-containing protein</fullName>
    </alternativeName>
</protein>
<organism>
    <name type="scientific">Staphylococcus aureus (strain MRSA252)</name>
    <dbReference type="NCBI Taxonomy" id="282458"/>
    <lineage>
        <taxon>Bacteria</taxon>
        <taxon>Bacillati</taxon>
        <taxon>Bacillota</taxon>
        <taxon>Bacilli</taxon>
        <taxon>Bacillales</taxon>
        <taxon>Staphylococcaceae</taxon>
        <taxon>Staphylococcus</taxon>
    </lineage>
</organism>
<keyword id="KW-0963">Cytoplasm</keyword>
<keyword id="KW-0597">Phosphoprotein</keyword>
<keyword id="KW-0598">Phosphotransferase system</keyword>
<keyword id="KW-0762">Sugar transport</keyword>
<keyword id="KW-0804">Transcription</keyword>
<keyword id="KW-0805">Transcription regulation</keyword>
<keyword id="KW-0813">Transport</keyword>
<reference key="1">
    <citation type="journal article" date="2004" name="Proc. Natl. Acad. Sci. U.S.A.">
        <title>Complete genomes of two clinical Staphylococcus aureus strains: evidence for the rapid evolution of virulence and drug resistance.</title>
        <authorList>
            <person name="Holden M.T.G."/>
            <person name="Feil E.J."/>
            <person name="Lindsay J.A."/>
            <person name="Peacock S.J."/>
            <person name="Day N.P.J."/>
            <person name="Enright M.C."/>
            <person name="Foster T.J."/>
            <person name="Moore C.E."/>
            <person name="Hurst L."/>
            <person name="Atkin R."/>
            <person name="Barron A."/>
            <person name="Bason N."/>
            <person name="Bentley S.D."/>
            <person name="Chillingworth C."/>
            <person name="Chillingworth T."/>
            <person name="Churcher C."/>
            <person name="Clark L."/>
            <person name="Corton C."/>
            <person name="Cronin A."/>
            <person name="Doggett J."/>
            <person name="Dowd L."/>
            <person name="Feltwell T."/>
            <person name="Hance Z."/>
            <person name="Harris B."/>
            <person name="Hauser H."/>
            <person name="Holroyd S."/>
            <person name="Jagels K."/>
            <person name="James K.D."/>
            <person name="Lennard N."/>
            <person name="Line A."/>
            <person name="Mayes R."/>
            <person name="Moule S."/>
            <person name="Mungall K."/>
            <person name="Ormond D."/>
            <person name="Quail M.A."/>
            <person name="Rabbinowitsch E."/>
            <person name="Rutherford K.M."/>
            <person name="Sanders M."/>
            <person name="Sharp S."/>
            <person name="Simmonds M."/>
            <person name="Stevens K."/>
            <person name="Whitehead S."/>
            <person name="Barrell B.G."/>
            <person name="Spratt B.G."/>
            <person name="Parkhill J."/>
        </authorList>
    </citation>
    <scope>NUCLEOTIDE SEQUENCE [LARGE SCALE GENOMIC DNA]</scope>
    <source>
        <strain>MRSA252</strain>
    </source>
</reference>
<feature type="chain" id="PRO_0000107875" description="Phosphocarrier protein HPr">
    <location>
        <begin position="1"/>
        <end position="88"/>
    </location>
</feature>
<feature type="domain" description="HPr" evidence="2">
    <location>
        <begin position="1"/>
        <end position="88"/>
    </location>
</feature>
<feature type="active site" description="Pros-phosphohistidine intermediate" evidence="2">
    <location>
        <position position="15"/>
    </location>
</feature>
<feature type="modified residue" description="Phosphoserine; by HPrK/P" evidence="2">
    <location>
        <position position="46"/>
    </location>
</feature>
<evidence type="ECO:0000250" key="1"/>
<evidence type="ECO:0000255" key="2">
    <source>
        <dbReference type="PROSITE-ProRule" id="PRU00681"/>
    </source>
</evidence>
<proteinExistence type="inferred from homology"/>
<dbReference type="EMBL" id="BX571856">
    <property type="protein sequence ID" value="CAG40059.1"/>
    <property type="molecule type" value="Genomic_DNA"/>
</dbReference>
<dbReference type="RefSeq" id="WP_000437472.1">
    <property type="nucleotide sequence ID" value="NC_002952.2"/>
</dbReference>
<dbReference type="SMR" id="Q6GI02"/>
<dbReference type="KEGG" id="sar:SAR1056"/>
<dbReference type="HOGENOM" id="CLU_136230_2_2_9"/>
<dbReference type="Proteomes" id="UP000000596">
    <property type="component" value="Chromosome"/>
</dbReference>
<dbReference type="GO" id="GO:0005737">
    <property type="term" value="C:cytoplasm"/>
    <property type="evidence" value="ECO:0007669"/>
    <property type="project" value="UniProtKB-SubCell"/>
</dbReference>
<dbReference type="GO" id="GO:0009401">
    <property type="term" value="P:phosphoenolpyruvate-dependent sugar phosphotransferase system"/>
    <property type="evidence" value="ECO:0007669"/>
    <property type="project" value="UniProtKB-KW"/>
</dbReference>
<dbReference type="CDD" id="cd00367">
    <property type="entry name" value="PTS-HPr_like"/>
    <property type="match status" value="1"/>
</dbReference>
<dbReference type="Gene3D" id="3.30.1340.10">
    <property type="entry name" value="HPr-like"/>
    <property type="match status" value="1"/>
</dbReference>
<dbReference type="InterPro" id="IPR050399">
    <property type="entry name" value="HPr"/>
</dbReference>
<dbReference type="InterPro" id="IPR000032">
    <property type="entry name" value="HPr-like"/>
</dbReference>
<dbReference type="InterPro" id="IPR035895">
    <property type="entry name" value="HPr-like_sf"/>
</dbReference>
<dbReference type="InterPro" id="IPR001020">
    <property type="entry name" value="PTS_HPr_His_P_site"/>
</dbReference>
<dbReference type="InterPro" id="IPR002114">
    <property type="entry name" value="PTS_HPr_Ser_P_site"/>
</dbReference>
<dbReference type="NCBIfam" id="NF010352">
    <property type="entry name" value="PRK13780.1"/>
    <property type="match status" value="1"/>
</dbReference>
<dbReference type="NCBIfam" id="TIGR01003">
    <property type="entry name" value="PTS_HPr_family"/>
    <property type="match status" value="1"/>
</dbReference>
<dbReference type="PANTHER" id="PTHR33705">
    <property type="entry name" value="PHOSPHOCARRIER PROTEIN HPR"/>
    <property type="match status" value="1"/>
</dbReference>
<dbReference type="PANTHER" id="PTHR33705:SF2">
    <property type="entry name" value="PHOSPHOCARRIER PROTEIN NPR"/>
    <property type="match status" value="1"/>
</dbReference>
<dbReference type="Pfam" id="PF00381">
    <property type="entry name" value="PTS-HPr"/>
    <property type="match status" value="1"/>
</dbReference>
<dbReference type="PRINTS" id="PR00107">
    <property type="entry name" value="PHOSPHOCPHPR"/>
</dbReference>
<dbReference type="SUPFAM" id="SSF55594">
    <property type="entry name" value="HPr-like"/>
    <property type="match status" value="1"/>
</dbReference>
<dbReference type="PROSITE" id="PS51350">
    <property type="entry name" value="PTS_HPR_DOM"/>
    <property type="match status" value="1"/>
</dbReference>
<dbReference type="PROSITE" id="PS00369">
    <property type="entry name" value="PTS_HPR_HIS"/>
    <property type="match status" value="1"/>
</dbReference>
<dbReference type="PROSITE" id="PS00589">
    <property type="entry name" value="PTS_HPR_SER"/>
    <property type="match status" value="1"/>
</dbReference>
<gene>
    <name type="primary">ptsH</name>
    <name type="ordered locus">SAR1056</name>
</gene>
<accession>Q6GI02</accession>